<dbReference type="EC" id="6.3.1.1" evidence="1"/>
<dbReference type="EMBL" id="CP001348">
    <property type="protein sequence ID" value="ACL76903.1"/>
    <property type="molecule type" value="Genomic_DNA"/>
</dbReference>
<dbReference type="RefSeq" id="WP_015925990.1">
    <property type="nucleotide sequence ID" value="NC_011898.1"/>
</dbReference>
<dbReference type="SMR" id="B8I6R1"/>
<dbReference type="STRING" id="394503.Ccel_2575"/>
<dbReference type="KEGG" id="cce:Ccel_2575"/>
<dbReference type="eggNOG" id="COG2502">
    <property type="taxonomic scope" value="Bacteria"/>
</dbReference>
<dbReference type="HOGENOM" id="CLU_071543_0_0_9"/>
<dbReference type="OrthoDB" id="9766088at2"/>
<dbReference type="UniPathway" id="UPA00134">
    <property type="reaction ID" value="UER00194"/>
</dbReference>
<dbReference type="Proteomes" id="UP000001349">
    <property type="component" value="Chromosome"/>
</dbReference>
<dbReference type="GO" id="GO:0005829">
    <property type="term" value="C:cytosol"/>
    <property type="evidence" value="ECO:0007669"/>
    <property type="project" value="TreeGrafter"/>
</dbReference>
<dbReference type="GO" id="GO:0004071">
    <property type="term" value="F:aspartate-ammonia ligase activity"/>
    <property type="evidence" value="ECO:0007669"/>
    <property type="project" value="UniProtKB-UniRule"/>
</dbReference>
<dbReference type="GO" id="GO:0005524">
    <property type="term" value="F:ATP binding"/>
    <property type="evidence" value="ECO:0007669"/>
    <property type="project" value="UniProtKB-UniRule"/>
</dbReference>
<dbReference type="GO" id="GO:0140096">
    <property type="term" value="F:catalytic activity, acting on a protein"/>
    <property type="evidence" value="ECO:0007669"/>
    <property type="project" value="UniProtKB-ARBA"/>
</dbReference>
<dbReference type="GO" id="GO:0016740">
    <property type="term" value="F:transferase activity"/>
    <property type="evidence" value="ECO:0007669"/>
    <property type="project" value="UniProtKB-ARBA"/>
</dbReference>
<dbReference type="GO" id="GO:0070981">
    <property type="term" value="P:L-asparagine biosynthetic process"/>
    <property type="evidence" value="ECO:0007669"/>
    <property type="project" value="UniProtKB-UniRule"/>
</dbReference>
<dbReference type="CDD" id="cd00645">
    <property type="entry name" value="AsnA"/>
    <property type="match status" value="1"/>
</dbReference>
<dbReference type="Gene3D" id="3.30.930.10">
    <property type="entry name" value="Bira Bifunctional Protein, Domain 2"/>
    <property type="match status" value="1"/>
</dbReference>
<dbReference type="HAMAP" id="MF_00555">
    <property type="entry name" value="AsnA"/>
    <property type="match status" value="1"/>
</dbReference>
<dbReference type="InterPro" id="IPR006195">
    <property type="entry name" value="aa-tRNA-synth_II"/>
</dbReference>
<dbReference type="InterPro" id="IPR045864">
    <property type="entry name" value="aa-tRNA-synth_II/BPL/LPL"/>
</dbReference>
<dbReference type="InterPro" id="IPR004618">
    <property type="entry name" value="AsnA"/>
</dbReference>
<dbReference type="NCBIfam" id="TIGR00669">
    <property type="entry name" value="asnA"/>
    <property type="match status" value="1"/>
</dbReference>
<dbReference type="PANTHER" id="PTHR30073">
    <property type="entry name" value="ASPARTATE--AMMONIA LIGASE"/>
    <property type="match status" value="1"/>
</dbReference>
<dbReference type="PANTHER" id="PTHR30073:SF5">
    <property type="entry name" value="ASPARTATE--AMMONIA LIGASE"/>
    <property type="match status" value="1"/>
</dbReference>
<dbReference type="Pfam" id="PF03590">
    <property type="entry name" value="AsnA"/>
    <property type="match status" value="1"/>
</dbReference>
<dbReference type="PIRSF" id="PIRSF001555">
    <property type="entry name" value="Asp_ammon_ligase"/>
    <property type="match status" value="1"/>
</dbReference>
<dbReference type="SUPFAM" id="SSF55681">
    <property type="entry name" value="Class II aaRS and biotin synthetases"/>
    <property type="match status" value="1"/>
</dbReference>
<dbReference type="PROSITE" id="PS50862">
    <property type="entry name" value="AA_TRNA_LIGASE_II"/>
    <property type="match status" value="1"/>
</dbReference>
<protein>
    <recommendedName>
        <fullName evidence="1">Aspartate--ammonia ligase</fullName>
        <ecNumber evidence="1">6.3.1.1</ecNumber>
    </recommendedName>
    <alternativeName>
        <fullName evidence="1">Asparagine synthetase A</fullName>
    </alternativeName>
</protein>
<feature type="chain" id="PRO_1000146691" description="Aspartate--ammonia ligase">
    <location>
        <begin position="1"/>
        <end position="336"/>
    </location>
</feature>
<comment type="catalytic activity">
    <reaction evidence="1">
        <text>L-aspartate + NH4(+) + ATP = L-asparagine + AMP + diphosphate + H(+)</text>
        <dbReference type="Rhea" id="RHEA:11372"/>
        <dbReference type="ChEBI" id="CHEBI:15378"/>
        <dbReference type="ChEBI" id="CHEBI:28938"/>
        <dbReference type="ChEBI" id="CHEBI:29991"/>
        <dbReference type="ChEBI" id="CHEBI:30616"/>
        <dbReference type="ChEBI" id="CHEBI:33019"/>
        <dbReference type="ChEBI" id="CHEBI:58048"/>
        <dbReference type="ChEBI" id="CHEBI:456215"/>
        <dbReference type="EC" id="6.3.1.1"/>
    </reaction>
</comment>
<comment type="pathway">
    <text evidence="1">Amino-acid biosynthesis; L-asparagine biosynthesis; L-asparagine from L-aspartate (ammonia route): step 1/1.</text>
</comment>
<comment type="subcellular location">
    <subcellularLocation>
        <location evidence="1">Cytoplasm</location>
    </subcellularLocation>
</comment>
<comment type="similarity">
    <text evidence="1">Belongs to the class-II aminoacyl-tRNA synthetase family. AsnA subfamily.</text>
</comment>
<organism>
    <name type="scientific">Ruminiclostridium cellulolyticum (strain ATCC 35319 / DSM 5812 / JCM 6584 / H10)</name>
    <name type="common">Clostridium cellulolyticum</name>
    <dbReference type="NCBI Taxonomy" id="394503"/>
    <lineage>
        <taxon>Bacteria</taxon>
        <taxon>Bacillati</taxon>
        <taxon>Bacillota</taxon>
        <taxon>Clostridia</taxon>
        <taxon>Eubacteriales</taxon>
        <taxon>Oscillospiraceae</taxon>
        <taxon>Ruminiclostridium</taxon>
    </lineage>
</organism>
<proteinExistence type="inferred from homology"/>
<gene>
    <name evidence="1" type="primary">asnA</name>
    <name type="ordered locus">Ccel_2575</name>
</gene>
<accession>B8I6R1</accession>
<sequence length="336" mass="38411">MNSLIKPEGYKPSLDIRMTEVAIKKTKDYFESELAKELNLTRVSAPLFVRPETGLNDNLNGVERPVAFDVKGIGGDTVEVVHSLAKWKRMALKRYGFAPGEGLYTDMNAIRRDEDMDNLHSVYVDQWDWEQIILKSERTEETLKTIVSKIFSVFKRTENYLSGLYPNLQKYLPEDIFFVTTQELEDMYPELTPKERETALAKEKKAIFIMKIGDTLKSGIKHDGRAPDYDDWALNGDIVFYYPVLDLAYEVSSMGIRVDEDSLVAQLKKAGCEDRKNLKFHKELINKELPYTIGGGIGQSRICMFFLGKAHIGEVQASIWSDDMISECSQHNIQLL</sequence>
<evidence type="ECO:0000255" key="1">
    <source>
        <dbReference type="HAMAP-Rule" id="MF_00555"/>
    </source>
</evidence>
<keyword id="KW-0028">Amino-acid biosynthesis</keyword>
<keyword id="KW-0061">Asparagine biosynthesis</keyword>
<keyword id="KW-0067">ATP-binding</keyword>
<keyword id="KW-0963">Cytoplasm</keyword>
<keyword id="KW-0436">Ligase</keyword>
<keyword id="KW-0547">Nucleotide-binding</keyword>
<keyword id="KW-1185">Reference proteome</keyword>
<name>ASNA_RUMCH</name>
<reference key="1">
    <citation type="submission" date="2009-01" db="EMBL/GenBank/DDBJ databases">
        <title>Complete sequence of Clostridium cellulolyticum H10.</title>
        <authorList>
            <consortium name="US DOE Joint Genome Institute"/>
            <person name="Lucas S."/>
            <person name="Copeland A."/>
            <person name="Lapidus A."/>
            <person name="Glavina del Rio T."/>
            <person name="Dalin E."/>
            <person name="Tice H."/>
            <person name="Bruce D."/>
            <person name="Goodwin L."/>
            <person name="Pitluck S."/>
            <person name="Chertkov O."/>
            <person name="Saunders E."/>
            <person name="Brettin T."/>
            <person name="Detter J.C."/>
            <person name="Han C."/>
            <person name="Larimer F."/>
            <person name="Land M."/>
            <person name="Hauser L."/>
            <person name="Kyrpides N."/>
            <person name="Ivanova N."/>
            <person name="Zhou J."/>
            <person name="Richardson P."/>
        </authorList>
    </citation>
    <scope>NUCLEOTIDE SEQUENCE [LARGE SCALE GENOMIC DNA]</scope>
    <source>
        <strain>ATCC 35319 / DSM 5812 / JCM 6584 / H10</strain>
    </source>
</reference>